<feature type="chain" id="PRO_0000198149" description="Ribosomal RNA large subunit methyltransferase H">
    <location>
        <begin position="1"/>
        <end position="156"/>
    </location>
</feature>
<feature type="binding site" evidence="1">
    <location>
        <position position="73"/>
    </location>
    <ligand>
        <name>S-adenosyl-L-methionine</name>
        <dbReference type="ChEBI" id="CHEBI:59789"/>
    </ligand>
</feature>
<feature type="binding site" evidence="1">
    <location>
        <position position="104"/>
    </location>
    <ligand>
        <name>S-adenosyl-L-methionine</name>
        <dbReference type="ChEBI" id="CHEBI:59789"/>
    </ligand>
</feature>
<feature type="binding site" evidence="1">
    <location>
        <begin position="123"/>
        <end position="128"/>
    </location>
    <ligand>
        <name>S-adenosyl-L-methionine</name>
        <dbReference type="ChEBI" id="CHEBI:59789"/>
    </ligand>
</feature>
<keyword id="KW-0963">Cytoplasm</keyword>
<keyword id="KW-0489">Methyltransferase</keyword>
<keyword id="KW-1185">Reference proteome</keyword>
<keyword id="KW-0698">rRNA processing</keyword>
<keyword id="KW-0949">S-adenosyl-L-methionine</keyword>
<keyword id="KW-0808">Transferase</keyword>
<comment type="function">
    <text evidence="1">Specifically methylates the pseudouridine at position 1915 (m3Psi1915) in 23S rRNA.</text>
</comment>
<comment type="catalytic activity">
    <reaction evidence="1">
        <text>pseudouridine(1915) in 23S rRNA + S-adenosyl-L-methionine = N(3)-methylpseudouridine(1915) in 23S rRNA + S-adenosyl-L-homocysteine + H(+)</text>
        <dbReference type="Rhea" id="RHEA:42752"/>
        <dbReference type="Rhea" id="RHEA-COMP:10221"/>
        <dbReference type="Rhea" id="RHEA-COMP:10222"/>
        <dbReference type="ChEBI" id="CHEBI:15378"/>
        <dbReference type="ChEBI" id="CHEBI:57856"/>
        <dbReference type="ChEBI" id="CHEBI:59789"/>
        <dbReference type="ChEBI" id="CHEBI:65314"/>
        <dbReference type="ChEBI" id="CHEBI:74486"/>
        <dbReference type="EC" id="2.1.1.177"/>
    </reaction>
</comment>
<comment type="subunit">
    <text evidence="1">Homodimer.</text>
</comment>
<comment type="subcellular location">
    <subcellularLocation>
        <location evidence="1">Cytoplasm</location>
    </subcellularLocation>
</comment>
<comment type="similarity">
    <text evidence="1">Belongs to the RNA methyltransferase RlmH family.</text>
</comment>
<accession>Q5F554</accession>
<evidence type="ECO:0000255" key="1">
    <source>
        <dbReference type="HAMAP-Rule" id="MF_00658"/>
    </source>
</evidence>
<gene>
    <name evidence="1" type="primary">rlmH</name>
    <name type="ordered locus">NGO_2082</name>
</gene>
<sequence length="156" mass="17510">MNITVLAVGTKMPRWVDEAVAEYAKRFGRDAAYAFKEIKPEKRGAGVNAVQGMAAEEKRILEAIPQGAFLVVLDERGKAPTSVELAEHLKSWRQNGEHVCFVIGGADGMTDRLKQQARMMMRLSSLTLPHGMVRVLLTEQLYRAVSILHNHPYHRE</sequence>
<protein>
    <recommendedName>
        <fullName evidence="1">Ribosomal RNA large subunit methyltransferase H</fullName>
        <ecNumber evidence="1">2.1.1.177</ecNumber>
    </recommendedName>
    <alternativeName>
        <fullName evidence="1">23S rRNA (pseudouridine1915-N3)-methyltransferase</fullName>
    </alternativeName>
    <alternativeName>
        <fullName evidence="1">23S rRNA m3Psi1915 methyltransferase</fullName>
    </alternativeName>
    <alternativeName>
        <fullName evidence="1">rRNA (pseudouridine-N3-)-methyltransferase RlmH</fullName>
    </alternativeName>
</protein>
<dbReference type="EC" id="2.1.1.177" evidence="1"/>
<dbReference type="EMBL" id="AE004969">
    <property type="protein sequence ID" value="AAW90683.1"/>
    <property type="molecule type" value="Genomic_DNA"/>
</dbReference>
<dbReference type="RefSeq" id="WP_003687038.1">
    <property type="nucleotide sequence ID" value="NC_002946.2"/>
</dbReference>
<dbReference type="RefSeq" id="YP_209095.1">
    <property type="nucleotide sequence ID" value="NC_002946.2"/>
</dbReference>
<dbReference type="SMR" id="Q5F554"/>
<dbReference type="STRING" id="242231.NGO_2082"/>
<dbReference type="KEGG" id="ngo:NGO_2082"/>
<dbReference type="PATRIC" id="fig|242231.10.peg.2521"/>
<dbReference type="HOGENOM" id="CLU_100552_1_0_4"/>
<dbReference type="Proteomes" id="UP000000535">
    <property type="component" value="Chromosome"/>
</dbReference>
<dbReference type="GO" id="GO:0005737">
    <property type="term" value="C:cytoplasm"/>
    <property type="evidence" value="ECO:0007669"/>
    <property type="project" value="UniProtKB-SubCell"/>
</dbReference>
<dbReference type="GO" id="GO:0070038">
    <property type="term" value="F:rRNA (pseudouridine-N3-)-methyltransferase activity"/>
    <property type="evidence" value="ECO:0007669"/>
    <property type="project" value="UniProtKB-UniRule"/>
</dbReference>
<dbReference type="CDD" id="cd18081">
    <property type="entry name" value="RlmH-like"/>
    <property type="match status" value="1"/>
</dbReference>
<dbReference type="Gene3D" id="3.40.1280.10">
    <property type="match status" value="1"/>
</dbReference>
<dbReference type="HAMAP" id="MF_00658">
    <property type="entry name" value="23SrRNA_methyltr_H"/>
    <property type="match status" value="1"/>
</dbReference>
<dbReference type="InterPro" id="IPR029028">
    <property type="entry name" value="Alpha/beta_knot_MTases"/>
</dbReference>
<dbReference type="InterPro" id="IPR003742">
    <property type="entry name" value="RlmH-like"/>
</dbReference>
<dbReference type="InterPro" id="IPR029026">
    <property type="entry name" value="tRNA_m1G_MTases_N"/>
</dbReference>
<dbReference type="NCBIfam" id="NF000986">
    <property type="entry name" value="PRK00103.1-4"/>
    <property type="match status" value="1"/>
</dbReference>
<dbReference type="PANTHER" id="PTHR33603">
    <property type="entry name" value="METHYLTRANSFERASE"/>
    <property type="match status" value="1"/>
</dbReference>
<dbReference type="PANTHER" id="PTHR33603:SF1">
    <property type="entry name" value="RIBOSOMAL RNA LARGE SUBUNIT METHYLTRANSFERASE H"/>
    <property type="match status" value="1"/>
</dbReference>
<dbReference type="Pfam" id="PF02590">
    <property type="entry name" value="SPOUT_MTase"/>
    <property type="match status" value="1"/>
</dbReference>
<dbReference type="PIRSF" id="PIRSF004505">
    <property type="entry name" value="MT_bac"/>
    <property type="match status" value="1"/>
</dbReference>
<dbReference type="SUPFAM" id="SSF75217">
    <property type="entry name" value="alpha/beta knot"/>
    <property type="match status" value="1"/>
</dbReference>
<proteinExistence type="inferred from homology"/>
<reference key="1">
    <citation type="submission" date="2003-03" db="EMBL/GenBank/DDBJ databases">
        <title>The complete genome sequence of Neisseria gonorrhoeae.</title>
        <authorList>
            <person name="Lewis L.A."/>
            <person name="Gillaspy A.F."/>
            <person name="McLaughlin R.E."/>
            <person name="Gipson M."/>
            <person name="Ducey T.F."/>
            <person name="Ownbey T."/>
            <person name="Hartman K."/>
            <person name="Nydick C."/>
            <person name="Carson M.B."/>
            <person name="Vaughn J."/>
            <person name="Thomson C."/>
            <person name="Song L."/>
            <person name="Lin S."/>
            <person name="Yuan X."/>
            <person name="Najar F."/>
            <person name="Zhan M."/>
            <person name="Ren Q."/>
            <person name="Zhu H."/>
            <person name="Qi S."/>
            <person name="Kenton S.M."/>
            <person name="Lai H."/>
            <person name="White J.D."/>
            <person name="Clifton S."/>
            <person name="Roe B.A."/>
            <person name="Dyer D.W."/>
        </authorList>
    </citation>
    <scope>NUCLEOTIDE SEQUENCE [LARGE SCALE GENOMIC DNA]</scope>
    <source>
        <strain>ATCC 700825 / FA 1090</strain>
    </source>
</reference>
<name>RLMH_NEIG1</name>
<organism>
    <name type="scientific">Neisseria gonorrhoeae (strain ATCC 700825 / FA 1090)</name>
    <dbReference type="NCBI Taxonomy" id="242231"/>
    <lineage>
        <taxon>Bacteria</taxon>
        <taxon>Pseudomonadati</taxon>
        <taxon>Pseudomonadota</taxon>
        <taxon>Betaproteobacteria</taxon>
        <taxon>Neisseriales</taxon>
        <taxon>Neisseriaceae</taxon>
        <taxon>Neisseria</taxon>
    </lineage>
</organism>